<organism>
    <name type="scientific">Homo sapiens</name>
    <name type="common">Human</name>
    <dbReference type="NCBI Taxonomy" id="9606"/>
    <lineage>
        <taxon>Eukaryota</taxon>
        <taxon>Metazoa</taxon>
        <taxon>Chordata</taxon>
        <taxon>Craniata</taxon>
        <taxon>Vertebrata</taxon>
        <taxon>Euteleostomi</taxon>
        <taxon>Mammalia</taxon>
        <taxon>Eutheria</taxon>
        <taxon>Euarchontoglires</taxon>
        <taxon>Primates</taxon>
        <taxon>Haplorrhini</taxon>
        <taxon>Catarrhini</taxon>
        <taxon>Hominidae</taxon>
        <taxon>Homo</taxon>
    </lineage>
</organism>
<comment type="alternative products">
    <event type="alternative splicing"/>
    <isoform>
        <id>Q6ZQQ6-1</id>
        <name>1</name>
        <sequence type="displayed"/>
    </isoform>
    <isoform>
        <id>Q6ZQQ6-2</id>
        <name>2</name>
        <sequence type="described" ref="VSP_030380"/>
    </isoform>
</comment>
<comment type="sequence caution" evidence="3">
    <conflict type="erroneous termination">
        <sequence resource="EMBL-CDS" id="AAK20167"/>
    </conflict>
    <text>Truncated C-terminus.</text>
</comment>
<comment type="sequence caution" evidence="3">
    <conflict type="frameshift">
        <sequence resource="EMBL-CDS" id="AAK20167"/>
    </conflict>
</comment>
<evidence type="ECO:0000256" key="1">
    <source>
        <dbReference type="SAM" id="MobiDB-lite"/>
    </source>
</evidence>
<evidence type="ECO:0000303" key="2">
    <source ref="3"/>
</evidence>
<evidence type="ECO:0000305" key="3"/>
<proteinExistence type="evidence at protein level"/>
<protein>
    <recommendedName>
        <fullName>WD repeat-containing protein 87</fullName>
    </recommendedName>
    <alternativeName>
        <fullName>Testis development protein NYD-SP11</fullName>
    </alternativeName>
</protein>
<accession>Q6ZQQ6</accession>
<accession>E7ESW6</accession>
<accession>Q9BWV9</accession>
<dbReference type="EMBL" id="AC016582">
    <property type="status" value="NOT_ANNOTATED_CDS"/>
    <property type="molecule type" value="Genomic_DNA"/>
</dbReference>
<dbReference type="EMBL" id="ABBA01040648">
    <property type="status" value="NOT_ANNOTATED_CDS"/>
    <property type="molecule type" value="Genomic_DNA"/>
</dbReference>
<dbReference type="EMBL" id="AK128826">
    <property type="protein sequence ID" value="BAC87627.1"/>
    <property type="molecule type" value="mRNA"/>
</dbReference>
<dbReference type="EMBL" id="AY026504">
    <property type="protein sequence ID" value="AAK20167.2"/>
    <property type="status" value="ALT_SEQ"/>
    <property type="molecule type" value="mRNA"/>
</dbReference>
<dbReference type="CCDS" id="CCDS46063.1">
    <molecule id="Q6ZQQ6-1"/>
</dbReference>
<dbReference type="CCDS" id="CCDS74356.1">
    <molecule id="Q6ZQQ6-2"/>
</dbReference>
<dbReference type="RefSeq" id="NP_114157.4">
    <molecule id="Q6ZQQ6-1"/>
    <property type="nucleotide sequence ID" value="NM_031951.4"/>
</dbReference>
<dbReference type="BioGRID" id="123800">
    <property type="interactions" value="20"/>
</dbReference>
<dbReference type="FunCoup" id="Q6ZQQ6">
    <property type="interactions" value="78"/>
</dbReference>
<dbReference type="IntAct" id="Q6ZQQ6">
    <property type="interactions" value="7"/>
</dbReference>
<dbReference type="STRING" id="9606.ENSP00000405012"/>
<dbReference type="GlyGen" id="Q6ZQQ6">
    <property type="glycosylation" value="1 site, 1 O-linked glycan (1 site)"/>
</dbReference>
<dbReference type="iPTMnet" id="Q6ZQQ6"/>
<dbReference type="PhosphoSitePlus" id="Q6ZQQ6"/>
<dbReference type="BioMuta" id="WDR87"/>
<dbReference type="jPOST" id="Q6ZQQ6"/>
<dbReference type="MassIVE" id="Q6ZQQ6"/>
<dbReference type="PaxDb" id="9606-ENSP00000405012"/>
<dbReference type="PeptideAtlas" id="Q6ZQQ6"/>
<dbReference type="ProteomicsDB" id="18075"/>
<dbReference type="ProteomicsDB" id="68085">
    <molecule id="Q6ZQQ6-1"/>
</dbReference>
<dbReference type="ProteomicsDB" id="68086">
    <molecule id="Q6ZQQ6-2"/>
</dbReference>
<dbReference type="Antibodypedia" id="59216">
    <property type="antibodies" value="16 antibodies from 7 providers"/>
</dbReference>
<dbReference type="Ensembl" id="ENST00000303868.5">
    <molecule id="Q6ZQQ6-1"/>
    <property type="protein sequence ID" value="ENSP00000368025.3"/>
    <property type="gene ID" value="ENSG00000171804.11"/>
</dbReference>
<dbReference type="GeneID" id="83889"/>
<dbReference type="KEGG" id="hsa:83889"/>
<dbReference type="UCSC" id="uc002ohj.3">
    <property type="organism name" value="human"/>
</dbReference>
<dbReference type="UCSC" id="uc010efu.3">
    <molecule id="Q6ZQQ6-1"/>
    <property type="organism name" value="human"/>
</dbReference>
<dbReference type="AGR" id="HGNC:29934"/>
<dbReference type="CTD" id="83889"/>
<dbReference type="DisGeNET" id="83889"/>
<dbReference type="GeneCards" id="WDR87"/>
<dbReference type="HGNC" id="HGNC:29934">
    <property type="gene designation" value="WDR87"/>
</dbReference>
<dbReference type="HPA" id="ENSG00000171804">
    <property type="expression patterns" value="Tissue enriched (testis)"/>
</dbReference>
<dbReference type="MalaCards" id="WDR87"/>
<dbReference type="MIM" id="620274">
    <property type="type" value="gene"/>
</dbReference>
<dbReference type="neXtProt" id="NX_Q6ZQQ6"/>
<dbReference type="OpenTargets" id="ENSG00000171804"/>
<dbReference type="PharmGKB" id="PA145147633"/>
<dbReference type="VEuPathDB" id="HostDB:ENSG00000171804"/>
<dbReference type="eggNOG" id="ENOG502QTCV">
    <property type="taxonomic scope" value="Eukaryota"/>
</dbReference>
<dbReference type="GeneTree" id="ENSGT00530000063583"/>
<dbReference type="HOGENOM" id="CLU_000543_0_0_1"/>
<dbReference type="InParanoid" id="Q6ZQQ6"/>
<dbReference type="OrthoDB" id="6262491at2759"/>
<dbReference type="PAN-GO" id="Q6ZQQ6">
    <property type="GO annotations" value="0 GO annotations based on evolutionary models"/>
</dbReference>
<dbReference type="TreeFam" id="TF338139"/>
<dbReference type="PathwayCommons" id="Q6ZQQ6"/>
<dbReference type="SignaLink" id="Q6ZQQ6"/>
<dbReference type="BioGRID-ORCS" id="83889">
    <property type="hits" value="21 hits in 1150 CRISPR screens"/>
</dbReference>
<dbReference type="GenomeRNAi" id="83889"/>
<dbReference type="Pharos" id="Q6ZQQ6">
    <property type="development level" value="Tdark"/>
</dbReference>
<dbReference type="PRO" id="PR:Q6ZQQ6"/>
<dbReference type="Proteomes" id="UP000005640">
    <property type="component" value="Chromosome 19"/>
</dbReference>
<dbReference type="RNAct" id="Q6ZQQ6">
    <property type="molecule type" value="protein"/>
</dbReference>
<dbReference type="Bgee" id="ENSG00000171804">
    <property type="expression patterns" value="Expressed in tibialis anterior and 20 other cell types or tissues"/>
</dbReference>
<dbReference type="ExpressionAtlas" id="Q6ZQQ6">
    <property type="expression patterns" value="baseline and differential"/>
</dbReference>
<dbReference type="Gene3D" id="2.130.10.10">
    <property type="entry name" value="YVTN repeat-like/Quinoprotein amine dehydrogenase"/>
    <property type="match status" value="2"/>
</dbReference>
<dbReference type="InterPro" id="IPR011047">
    <property type="entry name" value="Quinoprotein_ADH-like_sf"/>
</dbReference>
<dbReference type="InterPro" id="IPR015943">
    <property type="entry name" value="WD40/YVTN_repeat-like_dom_sf"/>
</dbReference>
<dbReference type="InterPro" id="IPR001680">
    <property type="entry name" value="WD40_rpt"/>
</dbReference>
<dbReference type="PANTHER" id="PTHR42968">
    <property type="entry name" value="WD REPEAT-CONTAINING"/>
    <property type="match status" value="1"/>
</dbReference>
<dbReference type="PANTHER" id="PTHR42968:SF9">
    <property type="entry name" value="WD REPEAT-CONTAINING PROTEIN 87"/>
    <property type="match status" value="1"/>
</dbReference>
<dbReference type="Pfam" id="PF00400">
    <property type="entry name" value="WD40"/>
    <property type="match status" value="2"/>
</dbReference>
<dbReference type="SMART" id="SM00320">
    <property type="entry name" value="WD40"/>
    <property type="match status" value="4"/>
</dbReference>
<dbReference type="SUPFAM" id="SSF50998">
    <property type="entry name" value="Quinoprotein alcohol dehydrogenase-like"/>
    <property type="match status" value="1"/>
</dbReference>
<dbReference type="PROSITE" id="PS50082">
    <property type="entry name" value="WD_REPEATS_2"/>
    <property type="match status" value="2"/>
</dbReference>
<dbReference type="PROSITE" id="PS50294">
    <property type="entry name" value="WD_REPEATS_REGION"/>
    <property type="match status" value="2"/>
</dbReference>
<name>WDR87_HUMAN</name>
<reference key="1">
    <citation type="journal article" date="2004" name="Nature">
        <title>The DNA sequence and biology of human chromosome 19.</title>
        <authorList>
            <person name="Grimwood J."/>
            <person name="Gordon L.A."/>
            <person name="Olsen A.S."/>
            <person name="Terry A."/>
            <person name="Schmutz J."/>
            <person name="Lamerdin J.E."/>
            <person name="Hellsten U."/>
            <person name="Goodstein D."/>
            <person name="Couronne O."/>
            <person name="Tran-Gyamfi M."/>
            <person name="Aerts A."/>
            <person name="Altherr M."/>
            <person name="Ashworth L."/>
            <person name="Bajorek E."/>
            <person name="Black S."/>
            <person name="Branscomb E."/>
            <person name="Caenepeel S."/>
            <person name="Carrano A.V."/>
            <person name="Caoile C."/>
            <person name="Chan Y.M."/>
            <person name="Christensen M."/>
            <person name="Cleland C.A."/>
            <person name="Copeland A."/>
            <person name="Dalin E."/>
            <person name="Dehal P."/>
            <person name="Denys M."/>
            <person name="Detter J.C."/>
            <person name="Escobar J."/>
            <person name="Flowers D."/>
            <person name="Fotopulos D."/>
            <person name="Garcia C."/>
            <person name="Georgescu A.M."/>
            <person name="Glavina T."/>
            <person name="Gomez M."/>
            <person name="Gonzales E."/>
            <person name="Groza M."/>
            <person name="Hammon N."/>
            <person name="Hawkins T."/>
            <person name="Haydu L."/>
            <person name="Ho I."/>
            <person name="Huang W."/>
            <person name="Israni S."/>
            <person name="Jett J."/>
            <person name="Kadner K."/>
            <person name="Kimball H."/>
            <person name="Kobayashi A."/>
            <person name="Larionov V."/>
            <person name="Leem S.-H."/>
            <person name="Lopez F."/>
            <person name="Lou Y."/>
            <person name="Lowry S."/>
            <person name="Malfatti S."/>
            <person name="Martinez D."/>
            <person name="McCready P.M."/>
            <person name="Medina C."/>
            <person name="Morgan J."/>
            <person name="Nelson K."/>
            <person name="Nolan M."/>
            <person name="Ovcharenko I."/>
            <person name="Pitluck S."/>
            <person name="Pollard M."/>
            <person name="Popkie A.P."/>
            <person name="Predki P."/>
            <person name="Quan G."/>
            <person name="Ramirez L."/>
            <person name="Rash S."/>
            <person name="Retterer J."/>
            <person name="Rodriguez A."/>
            <person name="Rogers S."/>
            <person name="Salamov A."/>
            <person name="Salazar A."/>
            <person name="She X."/>
            <person name="Smith D."/>
            <person name="Slezak T."/>
            <person name="Solovyev V."/>
            <person name="Thayer N."/>
            <person name="Tice H."/>
            <person name="Tsai M."/>
            <person name="Ustaszewska A."/>
            <person name="Vo N."/>
            <person name="Wagner M."/>
            <person name="Wheeler J."/>
            <person name="Wu K."/>
            <person name="Xie G."/>
            <person name="Yang J."/>
            <person name="Dubchak I."/>
            <person name="Furey T.S."/>
            <person name="DeJong P."/>
            <person name="Dickson M."/>
            <person name="Gordon D."/>
            <person name="Eichler E.E."/>
            <person name="Pennacchio L.A."/>
            <person name="Richardson P."/>
            <person name="Stubbs L."/>
            <person name="Rokhsar D.S."/>
            <person name="Myers R.M."/>
            <person name="Rubin E.M."/>
            <person name="Lucas S.M."/>
        </authorList>
    </citation>
    <scope>NUCLEOTIDE SEQUENCE [LARGE SCALE GENOMIC DNA]</scope>
</reference>
<reference key="2">
    <citation type="journal article" date="2004" name="Nat. Genet.">
        <title>Complete sequencing and characterization of 21,243 full-length human cDNAs.</title>
        <authorList>
            <person name="Ota T."/>
            <person name="Suzuki Y."/>
            <person name="Nishikawa T."/>
            <person name="Otsuki T."/>
            <person name="Sugiyama T."/>
            <person name="Irie R."/>
            <person name="Wakamatsu A."/>
            <person name="Hayashi K."/>
            <person name="Sato H."/>
            <person name="Nagai K."/>
            <person name="Kimura K."/>
            <person name="Makita H."/>
            <person name="Sekine M."/>
            <person name="Obayashi M."/>
            <person name="Nishi T."/>
            <person name="Shibahara T."/>
            <person name="Tanaka T."/>
            <person name="Ishii S."/>
            <person name="Yamamoto J."/>
            <person name="Saito K."/>
            <person name="Kawai Y."/>
            <person name="Isono Y."/>
            <person name="Nakamura Y."/>
            <person name="Nagahari K."/>
            <person name="Murakami K."/>
            <person name="Yasuda T."/>
            <person name="Iwayanagi T."/>
            <person name="Wagatsuma M."/>
            <person name="Shiratori A."/>
            <person name="Sudo H."/>
            <person name="Hosoiri T."/>
            <person name="Kaku Y."/>
            <person name="Kodaira H."/>
            <person name="Kondo H."/>
            <person name="Sugawara M."/>
            <person name="Takahashi M."/>
            <person name="Kanda K."/>
            <person name="Yokoi T."/>
            <person name="Furuya T."/>
            <person name="Kikkawa E."/>
            <person name="Omura Y."/>
            <person name="Abe K."/>
            <person name="Kamihara K."/>
            <person name="Katsuta N."/>
            <person name="Sato K."/>
            <person name="Tanikawa M."/>
            <person name="Yamazaki M."/>
            <person name="Ninomiya K."/>
            <person name="Ishibashi T."/>
            <person name="Yamashita H."/>
            <person name="Murakawa K."/>
            <person name="Fujimori K."/>
            <person name="Tanai H."/>
            <person name="Kimata M."/>
            <person name="Watanabe M."/>
            <person name="Hiraoka S."/>
            <person name="Chiba Y."/>
            <person name="Ishida S."/>
            <person name="Ono Y."/>
            <person name="Takiguchi S."/>
            <person name="Watanabe S."/>
            <person name="Yosida M."/>
            <person name="Hotuta T."/>
            <person name="Kusano J."/>
            <person name="Kanehori K."/>
            <person name="Takahashi-Fujii A."/>
            <person name="Hara H."/>
            <person name="Tanase T.-O."/>
            <person name="Nomura Y."/>
            <person name="Togiya S."/>
            <person name="Komai F."/>
            <person name="Hara R."/>
            <person name="Takeuchi K."/>
            <person name="Arita M."/>
            <person name="Imose N."/>
            <person name="Musashino K."/>
            <person name="Yuuki H."/>
            <person name="Oshima A."/>
            <person name="Sasaki N."/>
            <person name="Aotsuka S."/>
            <person name="Yoshikawa Y."/>
            <person name="Matsunawa H."/>
            <person name="Ichihara T."/>
            <person name="Shiohata N."/>
            <person name="Sano S."/>
            <person name="Moriya S."/>
            <person name="Momiyama H."/>
            <person name="Satoh N."/>
            <person name="Takami S."/>
            <person name="Terashima Y."/>
            <person name="Suzuki O."/>
            <person name="Nakagawa S."/>
            <person name="Senoh A."/>
            <person name="Mizoguchi H."/>
            <person name="Goto Y."/>
            <person name="Shimizu F."/>
            <person name="Wakebe H."/>
            <person name="Hishigaki H."/>
            <person name="Watanabe T."/>
            <person name="Sugiyama A."/>
            <person name="Takemoto M."/>
            <person name="Kawakami B."/>
            <person name="Yamazaki M."/>
            <person name="Watanabe K."/>
            <person name="Kumagai A."/>
            <person name="Itakura S."/>
            <person name="Fukuzumi Y."/>
            <person name="Fujimori Y."/>
            <person name="Komiyama M."/>
            <person name="Tashiro H."/>
            <person name="Tanigami A."/>
            <person name="Fujiwara T."/>
            <person name="Ono T."/>
            <person name="Yamada K."/>
            <person name="Fujii Y."/>
            <person name="Ozaki K."/>
            <person name="Hirao M."/>
            <person name="Ohmori Y."/>
            <person name="Kawabata A."/>
            <person name="Hikiji T."/>
            <person name="Kobatake N."/>
            <person name="Inagaki H."/>
            <person name="Ikema Y."/>
            <person name="Okamoto S."/>
            <person name="Okitani R."/>
            <person name="Kawakami T."/>
            <person name="Noguchi S."/>
            <person name="Itoh T."/>
            <person name="Shigeta K."/>
            <person name="Senba T."/>
            <person name="Matsumura K."/>
            <person name="Nakajima Y."/>
            <person name="Mizuno T."/>
            <person name="Morinaga M."/>
            <person name="Sasaki M."/>
            <person name="Togashi T."/>
            <person name="Oyama M."/>
            <person name="Hata H."/>
            <person name="Watanabe M."/>
            <person name="Komatsu T."/>
            <person name="Mizushima-Sugano J."/>
            <person name="Satoh T."/>
            <person name="Shirai Y."/>
            <person name="Takahashi Y."/>
            <person name="Nakagawa K."/>
            <person name="Okumura K."/>
            <person name="Nagase T."/>
            <person name="Nomura N."/>
            <person name="Kikuchi H."/>
            <person name="Masuho Y."/>
            <person name="Yamashita R."/>
            <person name="Nakai K."/>
            <person name="Yada T."/>
            <person name="Nakamura Y."/>
            <person name="Ohara O."/>
            <person name="Isogai T."/>
            <person name="Sugano S."/>
        </authorList>
    </citation>
    <scope>NUCLEOTIDE SEQUENCE [LARGE SCALE MRNA] OF 1-1350 (ISOFORM 1)</scope>
    <source>
        <tissue>Testis</tissue>
    </source>
</reference>
<reference key="3">
    <citation type="submission" date="2001-08" db="EMBL/GenBank/DDBJ databases">
        <title>Cloning of new testis gene (NYD-SP11) related to testis development from human testis cDNA library.</title>
        <authorList>
            <person name="Sha J.H."/>
        </authorList>
    </citation>
    <scope>NUCLEOTIDE SEQUENCE [MRNA] OF 1-1170 (ISOFORM 2)</scope>
    <source>
        <tissue>Testis</tissue>
    </source>
</reference>
<reference key="4">
    <citation type="journal article" date="2011" name="BMC Syst. Biol.">
        <title>Initial characterization of the human central proteome.</title>
        <authorList>
            <person name="Burkard T.R."/>
            <person name="Planyavsky M."/>
            <person name="Kaupe I."/>
            <person name="Breitwieser F.P."/>
            <person name="Buerckstuemmer T."/>
            <person name="Bennett K.L."/>
            <person name="Superti-Furga G."/>
            <person name="Colinge J."/>
        </authorList>
    </citation>
    <scope>IDENTIFICATION BY MASS SPECTROMETRY [LARGE SCALE ANALYSIS]</scope>
</reference>
<feature type="chain" id="PRO_0000314821" description="WD repeat-containing protein 87">
    <location>
        <begin position="1"/>
        <end position="2873"/>
    </location>
</feature>
<feature type="repeat" description="WD 1">
    <location>
        <begin position="108"/>
        <end position="146"/>
    </location>
</feature>
<feature type="repeat" description="WD 2">
    <location>
        <begin position="199"/>
        <end position="239"/>
    </location>
</feature>
<feature type="repeat" description="WD 3">
    <location>
        <begin position="242"/>
        <end position="283"/>
    </location>
</feature>
<feature type="repeat" description="WD 4">
    <location>
        <begin position="368"/>
        <end position="407"/>
    </location>
</feature>
<feature type="repeat" description="WD 5">
    <location>
        <begin position="415"/>
        <end position="460"/>
    </location>
</feature>
<feature type="repeat" description="WD 6">
    <location>
        <begin position="516"/>
        <end position="553"/>
    </location>
</feature>
<feature type="repeat" description="WD 7">
    <location>
        <begin position="565"/>
        <end position="604"/>
    </location>
</feature>
<feature type="region of interest" description="Disordered" evidence="1">
    <location>
        <begin position="1049"/>
        <end position="1124"/>
    </location>
</feature>
<feature type="region of interest" description="Disordered" evidence="1">
    <location>
        <begin position="1177"/>
        <end position="1199"/>
    </location>
</feature>
<feature type="region of interest" description="Disordered" evidence="1">
    <location>
        <begin position="1392"/>
        <end position="1413"/>
    </location>
</feature>
<feature type="region of interest" description="Disordered" evidence="1">
    <location>
        <begin position="1531"/>
        <end position="1607"/>
    </location>
</feature>
<feature type="region of interest" description="Disordered" evidence="1">
    <location>
        <begin position="2199"/>
        <end position="2338"/>
    </location>
</feature>
<feature type="compositionally biased region" description="Basic residues" evidence="1">
    <location>
        <begin position="1089"/>
        <end position="1101"/>
    </location>
</feature>
<feature type="compositionally biased region" description="Basic residues" evidence="1">
    <location>
        <begin position="1187"/>
        <end position="1197"/>
    </location>
</feature>
<feature type="compositionally biased region" description="Basic and acidic residues" evidence="1">
    <location>
        <begin position="1549"/>
        <end position="1574"/>
    </location>
</feature>
<feature type="compositionally biased region" description="Basic residues" evidence="1">
    <location>
        <begin position="1575"/>
        <end position="1586"/>
    </location>
</feature>
<feature type="compositionally biased region" description="Basic and acidic residues" evidence="1">
    <location>
        <begin position="1587"/>
        <end position="1607"/>
    </location>
</feature>
<feature type="compositionally biased region" description="Basic and acidic residues" evidence="1">
    <location>
        <begin position="2204"/>
        <end position="2213"/>
    </location>
</feature>
<feature type="compositionally biased region" description="Acidic residues" evidence="1">
    <location>
        <begin position="2244"/>
        <end position="2276"/>
    </location>
</feature>
<feature type="compositionally biased region" description="Basic and acidic residues" evidence="1">
    <location>
        <begin position="2277"/>
        <end position="2287"/>
    </location>
</feature>
<feature type="compositionally biased region" description="Acidic residues" evidence="1">
    <location>
        <begin position="2304"/>
        <end position="2337"/>
    </location>
</feature>
<feature type="splice variant" id="VSP_030380" description="In isoform 2." evidence="2">
    <original>S</original>
    <variation>SQALFKESRYPQNMPCVCYYFSDAHFFASLSWVTSNTKEI</variation>
    <location>
        <position position="42"/>
    </location>
</feature>
<feature type="sequence variant" id="VAR_057638" description="In dbSNP:rs12104280.">
    <original>H</original>
    <variation>Y</variation>
    <location>
        <position position="496"/>
    </location>
</feature>
<feature type="sequence variant" id="VAR_057639" description="In dbSNP:rs6508750.">
    <original>R</original>
    <variation>Q</variation>
    <location>
        <position position="1583"/>
    </location>
</feature>
<feature type="sequence variant" id="VAR_057640" description="In dbSNP:rs10422056.">
    <original>N</original>
    <variation>K</variation>
    <location>
        <position position="1885"/>
    </location>
</feature>
<feature type="sequence variant" id="VAR_057641" description="In dbSNP:rs10408510.">
    <original>H</original>
    <variation>L</variation>
    <location>
        <position position="2570"/>
    </location>
</feature>
<feature type="sequence conflict" description="In Ref. 3; AAK20167." evidence="3" ref="3">
    <original>T</original>
    <variation>S</variation>
    <location>
        <position position="135"/>
    </location>
</feature>
<feature type="sequence conflict" description="In Ref. 2; BAC87627." evidence="3" ref="2">
    <original>T</original>
    <variation>A</variation>
    <location>
        <position position="177"/>
    </location>
</feature>
<feature type="sequence conflict" description="In Ref. 3; AAK20167." evidence="3" ref="3">
    <original>I</original>
    <variation>T</variation>
    <location>
        <position position="226"/>
    </location>
</feature>
<feature type="sequence conflict" description="In Ref. 3; AAK20167." evidence="3" ref="3">
    <original>K</original>
    <variation>Q</variation>
    <location>
        <position position="529"/>
    </location>
</feature>
<feature type="sequence conflict" description="In Ref. 2; BAC87627 and 3; AAK20167." evidence="3" ref="2 3">
    <original>G</original>
    <variation>A</variation>
    <location>
        <position position="602"/>
    </location>
</feature>
<feature type="sequence conflict" description="In Ref. 3; AAK20167." evidence="3" ref="3">
    <original>DR</original>
    <variation>NS</variation>
    <location>
        <begin position="817"/>
        <end position="818"/>
    </location>
</feature>
<feature type="sequence conflict" description="In Ref. 3; AAK20167." evidence="3" ref="3">
    <original>E</original>
    <variation>G</variation>
    <location>
        <position position="821"/>
    </location>
</feature>
<feature type="sequence conflict" description="In Ref. 3; AAK20167." evidence="3" ref="3">
    <original>E</original>
    <variation>G</variation>
    <location>
        <position position="939"/>
    </location>
</feature>
<gene>
    <name type="primary">WDR87</name>
</gene>
<sequence>MSSPRLIPLWKDLKLLLNDTINKSKQPSEDPKNCLIVLSDRSQAVAWMKSKTEDMVEKRTFSMTERLPPIQSMVHAGSFHILVVYCGDLILRLFGDHFRAFKPLGKVPCRFNISCLCYDPEMKMLLSGILGAVVTWVIELGGTGLQIAHMVSMPGDELVQDIVLNGPSGSLLALCETVVRVLMHQGKGQLGEVKRFTSTSSGSSITCCFTCFDQGFLYAGNQAGEIQVWSLQQGHPLHSFQAHQSGVICIRSRPEAHTLLTAGSDSLIKEWNLTSGSLLRRLELGEELYRLQFIDSITFFCQTAHSFSLHRLPCFYSLFNVCGSAPQQLRRVCCGNNWFRILCTTEDGLLRFVSPVTGDLLVITWPFSILDQAVDWAYDPGKEELFVATGSSEVLVFDTTRCPCPAKYLLGTSPNSQDFVQCLAYGHFNLGRGLEGLIFSGHQSGVIRVLSQHSCARLEKFMHFGAVLALSTLSGGIFGGQGNSLLCSYGMDDYVHLSEAVLDGVKVQLRPLASILSSCHLTHLILLPKSVGAITETNCLRLWKFHDFLSSGSQNGLKFIETLPLHLCAITSFDVCLSLSLFVTGSADGSVRIWDFHGRLIGILDSSLHFGPVCFANDRGDLLVTFNQSLYLVSCLKLLPPALLTRLSFMSISDEVLEVPKPFIPSFFFSFETMFVPKYIYPGQAQQKLVGLEKLVNNRAIAFDHSVPHVIEEDEEGSPVLLRSSMHYSLQDMEDWMQVSKRYQCHYVLPPQLQLTSWDGLNPYQILRYYFGHGREWLFAPDCYIPNSVIRARLWPEGTPIYLQCNLHAPQRELEWDRSQEFFFWHSRVRAISNTEYPKNKEEDEHFLEMRLSKDVTYSVLTDGANRSWLGRKMSEITINSMIETMLNIMVHASLLKYQCCVGALGQIFASYQVSPALRSETARRLLNDTTNSNPLIRELAWEGLKRLGMITHLFAMPLAQGLMDKDERVRIKTLSLMAEIGIHSRTSLLQLTQKQETFREMQQQMIGEEPLDHLLGMRATDLQILSTQVEQRLNENLTLSHRDEKPAFSLDVSMPSELKSSLKPPTVSEESEVAIKPSKGQRRGQAGVKKHSQKWLRGLKKTKERDSKQMSTEPGLLEDESGTEAAPIEMEEASVYSQWSSSTSVIKLSKDVDSQEKDISKDHIALTLKRLQKIRDKRDKKATAQKLKKKHKKKGKEAKVINEETTPPVMEQPVTKKVKIQGRGASGISGRRSTAGDGSSWRDDLCRLMALRISGSQTKMSENLNAELVTFAQEMLVDRHPSWELFQEICPLLKKESKVLLEDLDWDVVPPEKKPIFIQEGAIREDMIQGVTQEVIRHKEVMPREEEQAQKKARDMLGLEETQVILKKGKKVIFLEPGNVTMGKEISKKEEKKTFQKSPKQGRKAVQKERKVGKIKREMTKEERDMSEEVEEMATLEEKVVKQEGKLVMIERTPSWQDWKKAWDEWKQVHGETRKSWKAWKEEWEKRLLQEEEKLHQAGEKLSPEEEMLQEDKKLKWEEWKQVWENMLSSKSKEQQYKDEEEVTLEEEVSREGEEKEQQVTEEQRHIQEEHKWARIHRKRARAEKKRAQEERKLAQEEEKLAQEERQLAQEERKLAQAYVKITQDDREMAQAEGKFAQKEETLAQRGEKLSQEAEKLAQKRKKLAKKWEKVAREEEKLAKKGGKLAEVKNILAQKVEELPQREQNLDWQEKELAQELEELEWDMEELSWKEEELNQEEGKLVEEKKKLAEEEEALAWQREKLSEEETKLAQEEELLIQEKEKLAQHKEKMPEEEERLGRKREQLIEKKMKLAQKRERWINSMEELTKNKMILYQKKNLAQEKKNLAQEKEKLAQRKENLLYNKERLTHSKKQLVQVKNKLGMFNKILAQVEEKLTQEKETVIKKKEKLAETEKKLVQVEDSLAKKQEKLAQEKMKLALEKAMVQGKKRLRGELDIAKEEKALNLEMKRLAEEKMRLVEGKETLSKGETPETSRQRKMTQVEQELFERKLSLEEKILLHEDRILAMEESEIAKGKLEFTRGQRIFVQGQRKLAKASRKLIKKRESLSKEPAKLNKILKALQKLTRDERKLTQEEIKMTKMKRALFVKERRLSIEQSKLDIKEWDFSEKRSELTKDEKKLARKQRKLANKMRRMINKEEKMTEEESKLARKHSEVILDDEEEGGIEEEEVIPFLKRRWRKRKEAKRGDKPKEKFSSQVDEVESEEHFSEEMESLLDELEKQESLSSEEEEEREEEEEREEEEEREEEEERKEEEEGEEKQVEKEEEEKKKKKKEKKKEEVQEKEEVFEEKEEIMSEEETESLSDEEEEEESCSLEEEVDREKEILKKEKQFKLQEQRRKSLRGRERVLSILRGVPHGKGRAIRLGVLKSPLKKLMSTALEMKEKTPVPVPEKQISWEDKKATVVEIPRKFLGTMDKEREVMGKYEPIPPHVLGTVLESQAQDLKTPFMSHILRRTVEAEELQHKPLGAWWKWFLQHPPLMGQTEVQLPLSQIPAKEQHADVSLSDVEWIRHVLERMEAGEQLSRDGFHRLCQLLKDLASKGNLEWLHLAKHEAIVYRHRQALESQDTRISSRQSMSPKYLKVIPPIKAKEKESWPKPLAVPTQKSPLATKRIPDPRAKNWHLLGEPYRSERAQQISIAHKEMEMQYFYPATRDIFPSAHASVEKQTLALMFQKDFWDFKDKRRFPKLPKLEKKTQPISKKKEELPLWETFVALYHVLRMLQQRYPKDSTAWMEQFYQLMDLYQLKSPRIQKLLQELLMREEPQPQEIIYEEALKATELVPGERLFCCLFCGSSHTPRSPQEFQGAVPLPWQNCVRTILPVGIARYGILELAWKSLPEADLHLTKALTHTVAPTL</sequence>
<keyword id="KW-0025">Alternative splicing</keyword>
<keyword id="KW-1267">Proteomics identification</keyword>
<keyword id="KW-1185">Reference proteome</keyword>
<keyword id="KW-0677">Repeat</keyword>
<keyword id="KW-0853">WD repeat</keyword>